<comment type="function">
    <text evidence="2">Part of a complex that catalyzes the reversible reduction of CoM-S-S-CoB to the thiol-coenzymes H-S-CoM (coenzyme M) and H-S-CoB (coenzyme B). Catalyzes the transfer of electrons from ferredoxin to CoM-S-S-CoB during methanogenesis from acetate. Electrons transfer from ferredoxin to CoM-S-S-CoB via HdrA2, HdrC2 and HdrB2. In addition, the complex can use electron bifurcation to direct electron pairs from reduced coenzyme F420 towards the reduction of both ferredoxin and CoB-CoM heterodisulfide. This activity may take place during Fe(III)-dependent anaerobic methane oxidation.</text>
</comment>
<comment type="catalytic activity">
    <reaction evidence="2">
        <text>coenzyme B + coenzyme M + 2 oxidized [2Fe-2S]-[ferredoxin] = coenzyme M-coenzyme B heterodisulfide + 2 reduced [2Fe-2S]-[ferredoxin] + 2 H(+)</text>
        <dbReference type="Rhea" id="RHEA:55160"/>
        <dbReference type="Rhea" id="RHEA-COMP:10000"/>
        <dbReference type="Rhea" id="RHEA-COMP:10001"/>
        <dbReference type="ChEBI" id="CHEBI:15378"/>
        <dbReference type="ChEBI" id="CHEBI:33737"/>
        <dbReference type="ChEBI" id="CHEBI:33738"/>
        <dbReference type="ChEBI" id="CHEBI:58319"/>
        <dbReference type="ChEBI" id="CHEBI:58411"/>
        <dbReference type="ChEBI" id="CHEBI:58596"/>
        <dbReference type="EC" id="1.8.7.3"/>
    </reaction>
</comment>
<comment type="catalytic activity">
    <reaction evidence="2">
        <text>coenzyme B + 2 oxidized coenzyme F420-(gamma-L-Glu)(n) + coenzyme M + 2 reduced [2Fe-2S]-[ferredoxin] + 4 H(+) = coenzyme M-coenzyme B heterodisulfide + 2 reduced coenzyme F420-(gamma-L-Glu)(n) + 2 oxidized [2Fe-2S]-[ferredoxin]</text>
        <dbReference type="Rhea" id="RHEA:55744"/>
        <dbReference type="Rhea" id="RHEA-COMP:10000"/>
        <dbReference type="Rhea" id="RHEA-COMP:10001"/>
        <dbReference type="Rhea" id="RHEA-COMP:12939"/>
        <dbReference type="Rhea" id="RHEA-COMP:14378"/>
        <dbReference type="ChEBI" id="CHEBI:15378"/>
        <dbReference type="ChEBI" id="CHEBI:33737"/>
        <dbReference type="ChEBI" id="CHEBI:33738"/>
        <dbReference type="ChEBI" id="CHEBI:58319"/>
        <dbReference type="ChEBI" id="CHEBI:58411"/>
        <dbReference type="ChEBI" id="CHEBI:58596"/>
        <dbReference type="ChEBI" id="CHEBI:133980"/>
        <dbReference type="ChEBI" id="CHEBI:139511"/>
        <dbReference type="EC" id="1.8.98.4"/>
    </reaction>
</comment>
<comment type="cofactor">
    <cofactor evidence="1 2">
        <name>[4Fe-4S] cluster</name>
        <dbReference type="ChEBI" id="CHEBI:49883"/>
    </cofactor>
    <text evidence="1 2">Binds 2 [4Fe-4S] cluster.</text>
</comment>
<comment type="pathway">
    <text evidence="4">Cofactor metabolism; coenzyme M-coenzyme B heterodisulfide reduction; coenzyme B and coenzyme M from coenzyme M-coenzyme B heterodisulfide: step 1/1.</text>
</comment>
<comment type="subunit">
    <text evidence="2">The ferredoxin/F(420)H(2)-dependent CoB-CoM heterodisulfide reductase is composed of three subunits; HdrA2, HdrB2 and HdrC2.</text>
</comment>
<comment type="subcellular location">
    <subcellularLocation>
        <location evidence="2">Cytoplasm</location>
    </subcellularLocation>
</comment>
<comment type="similarity">
    <text evidence="4">Belongs to the HdrC family.</text>
</comment>
<dbReference type="EC" id="1.8.7.3" evidence="2"/>
<dbReference type="EC" id="1.8.98.4" evidence="2"/>
<dbReference type="EMBL" id="AE010299">
    <property type="protein sequence ID" value="AAM07581.1"/>
    <property type="molecule type" value="Genomic_DNA"/>
</dbReference>
<dbReference type="RefSeq" id="WP_011024118.1">
    <property type="nucleotide sequence ID" value="NC_003552.1"/>
</dbReference>
<dbReference type="SMR" id="Q8TIB9"/>
<dbReference type="FunCoup" id="Q8TIB9">
    <property type="interactions" value="73"/>
</dbReference>
<dbReference type="STRING" id="188937.MA_4236"/>
<dbReference type="EnsemblBacteria" id="AAM07581">
    <property type="protein sequence ID" value="AAM07581"/>
    <property type="gene ID" value="MA_4236"/>
</dbReference>
<dbReference type="GeneID" id="1476130"/>
<dbReference type="KEGG" id="mac:MA_4236"/>
<dbReference type="HOGENOM" id="CLU_121273_0_0_2"/>
<dbReference type="InParanoid" id="Q8TIB9"/>
<dbReference type="OrthoDB" id="144910at2157"/>
<dbReference type="PhylomeDB" id="Q8TIB9"/>
<dbReference type="BioCyc" id="MetaCyc:MONOMER-20161"/>
<dbReference type="UniPathway" id="UPA00647">
    <property type="reaction ID" value="UER00700"/>
</dbReference>
<dbReference type="Proteomes" id="UP000002487">
    <property type="component" value="Chromosome"/>
</dbReference>
<dbReference type="GO" id="GO:0005737">
    <property type="term" value="C:cytoplasm"/>
    <property type="evidence" value="ECO:0007669"/>
    <property type="project" value="UniProtKB-SubCell"/>
</dbReference>
<dbReference type="GO" id="GO:0051539">
    <property type="term" value="F:4 iron, 4 sulfur cluster binding"/>
    <property type="evidence" value="ECO:0007669"/>
    <property type="project" value="UniProtKB-KW"/>
</dbReference>
<dbReference type="GO" id="GO:0051912">
    <property type="term" value="F:CoB--CoM heterodisulfide reductase activity"/>
    <property type="evidence" value="ECO:0007669"/>
    <property type="project" value="InterPro"/>
</dbReference>
<dbReference type="GO" id="GO:0046872">
    <property type="term" value="F:metal ion binding"/>
    <property type="evidence" value="ECO:0007669"/>
    <property type="project" value="UniProtKB-KW"/>
</dbReference>
<dbReference type="GO" id="GO:0015948">
    <property type="term" value="P:methanogenesis"/>
    <property type="evidence" value="ECO:0007669"/>
    <property type="project" value="UniProtKB-KW"/>
</dbReference>
<dbReference type="Gene3D" id="1.10.1060.10">
    <property type="entry name" value="Alpha-helical ferredoxin"/>
    <property type="match status" value="1"/>
</dbReference>
<dbReference type="InterPro" id="IPR017896">
    <property type="entry name" value="4Fe4S_Fe-S-bd"/>
</dbReference>
<dbReference type="InterPro" id="IPR017900">
    <property type="entry name" value="4Fe4S_Fe_S_CS"/>
</dbReference>
<dbReference type="InterPro" id="IPR017680">
    <property type="entry name" value="CoB/CoM_hetero-S_Rdtase_csu"/>
</dbReference>
<dbReference type="InterPro" id="IPR051460">
    <property type="entry name" value="HdrC_iron-sulfur_subunit"/>
</dbReference>
<dbReference type="InterPro" id="IPR009051">
    <property type="entry name" value="Helical_ferredxn"/>
</dbReference>
<dbReference type="NCBIfam" id="TIGR03290">
    <property type="entry name" value="CoB_CoM_SS_C"/>
    <property type="match status" value="1"/>
</dbReference>
<dbReference type="PANTHER" id="PTHR43255:SF1">
    <property type="entry name" value="IRON-SULFUR-BINDING OXIDOREDUCTASE FADF-RELATED"/>
    <property type="match status" value="1"/>
</dbReference>
<dbReference type="PANTHER" id="PTHR43255">
    <property type="entry name" value="IRON-SULFUR-BINDING OXIDOREDUCTASE FADF-RELATED-RELATED"/>
    <property type="match status" value="1"/>
</dbReference>
<dbReference type="Pfam" id="PF13183">
    <property type="entry name" value="Fer4_8"/>
    <property type="match status" value="1"/>
</dbReference>
<dbReference type="SUPFAM" id="SSF46548">
    <property type="entry name" value="alpha-helical ferredoxin"/>
    <property type="match status" value="1"/>
</dbReference>
<dbReference type="PROSITE" id="PS00198">
    <property type="entry name" value="4FE4S_FER_1"/>
    <property type="match status" value="2"/>
</dbReference>
<dbReference type="PROSITE" id="PS51379">
    <property type="entry name" value="4FE4S_FER_2"/>
    <property type="match status" value="2"/>
</dbReference>
<sequence>MSEELLKLLKAEGLDLLSCMHCGICTGSCPSGRHTGLNTRRIIRDARKNRAAVLSDYDLWLCTTCYTCQERCPRGIPITDAILELRRLAVREGLMLPEHRFVSEMVLECGHAVPLDEETKKKREELGLDPIPETVQKDPEALEGLKTLLKTCKFDELVAKK</sequence>
<reference key="1">
    <citation type="journal article" date="2002" name="Genome Res.">
        <title>The genome of Methanosarcina acetivorans reveals extensive metabolic and physiological diversity.</title>
        <authorList>
            <person name="Galagan J.E."/>
            <person name="Nusbaum C."/>
            <person name="Roy A."/>
            <person name="Endrizzi M.G."/>
            <person name="Macdonald P."/>
            <person name="FitzHugh W."/>
            <person name="Calvo S."/>
            <person name="Engels R."/>
            <person name="Smirnov S."/>
            <person name="Atnoor D."/>
            <person name="Brown A."/>
            <person name="Allen N."/>
            <person name="Naylor J."/>
            <person name="Stange-Thomann N."/>
            <person name="DeArellano K."/>
            <person name="Johnson R."/>
            <person name="Linton L."/>
            <person name="McEwan P."/>
            <person name="McKernan K."/>
            <person name="Talamas J."/>
            <person name="Tirrell A."/>
            <person name="Ye W."/>
            <person name="Zimmer A."/>
            <person name="Barber R.D."/>
            <person name="Cann I."/>
            <person name="Graham D.E."/>
            <person name="Grahame D.A."/>
            <person name="Guss A.M."/>
            <person name="Hedderich R."/>
            <person name="Ingram-Smith C."/>
            <person name="Kuettner H.C."/>
            <person name="Krzycki J.A."/>
            <person name="Leigh J.A."/>
            <person name="Li W."/>
            <person name="Liu J."/>
            <person name="Mukhopadhyay B."/>
            <person name="Reeve J.N."/>
            <person name="Smith K."/>
            <person name="Springer T.A."/>
            <person name="Umayam L.A."/>
            <person name="White O."/>
            <person name="White R.H."/>
            <person name="de Macario E.C."/>
            <person name="Ferry J.G."/>
            <person name="Jarrell K.F."/>
            <person name="Jing H."/>
            <person name="Macario A.J.L."/>
            <person name="Paulsen I.T."/>
            <person name="Pritchett M."/>
            <person name="Sowers K.R."/>
            <person name="Swanson R.V."/>
            <person name="Zinder S.H."/>
            <person name="Lander E."/>
            <person name="Metcalf W.W."/>
            <person name="Birren B."/>
        </authorList>
    </citation>
    <scope>NUCLEOTIDE SEQUENCE [LARGE SCALE GENOMIC DNA]</scope>
    <source>
        <strain>ATCC 35395 / DSM 2834 / JCM 12185 / C2A</strain>
    </source>
</reference>
<reference key="2">
    <citation type="journal article" date="2017" name="MBio">
        <title>A ferredoxin- and F420H2-dependent, electron-bifurcating, heterodisulfide reductase with homologs in the domains Bacteria and Archaea.</title>
        <authorList>
            <person name="Yan Z."/>
            <person name="Wang M."/>
            <person name="Ferry J.G."/>
        </authorList>
    </citation>
    <scope>FUNCTION</scope>
    <scope>CATALYTIC ACTIVITY</scope>
    <scope>COFACTOR</scope>
    <scope>SUBUNIT</scope>
    <scope>SUBCELLULAR LOCATION</scope>
    <source>
        <strain>ATCC 35395 / DSM 2834 / JCM 12185 / C2A</strain>
    </source>
</reference>
<organism>
    <name type="scientific">Methanosarcina acetivorans (strain ATCC 35395 / DSM 2834 / JCM 12185 / C2A)</name>
    <dbReference type="NCBI Taxonomy" id="188937"/>
    <lineage>
        <taxon>Archaea</taxon>
        <taxon>Methanobacteriati</taxon>
        <taxon>Methanobacteriota</taxon>
        <taxon>Stenosarchaea group</taxon>
        <taxon>Methanomicrobia</taxon>
        <taxon>Methanosarcinales</taxon>
        <taxon>Methanosarcinaceae</taxon>
        <taxon>Methanosarcina</taxon>
    </lineage>
</organism>
<feature type="chain" id="PRO_0000150072" description="Ferredoxin/F(420)H(2)-dependent CoB-CoM heterodisulfide reductase subunit C">
    <location>
        <begin position="1"/>
        <end position="161"/>
    </location>
</feature>
<feature type="domain" description="4Fe-4S ferredoxin-type 1" evidence="1">
    <location>
        <begin position="10"/>
        <end position="40"/>
    </location>
</feature>
<feature type="domain" description="4Fe-4S ferredoxin-type 2" evidence="1">
    <location>
        <begin position="51"/>
        <end position="82"/>
    </location>
</feature>
<feature type="binding site" evidence="1">
    <location>
        <position position="19"/>
    </location>
    <ligand>
        <name>[4Fe-4S] cluster</name>
        <dbReference type="ChEBI" id="CHEBI:49883"/>
        <label>1</label>
    </ligand>
</feature>
<feature type="binding site" evidence="1">
    <location>
        <position position="22"/>
    </location>
    <ligand>
        <name>[4Fe-4S] cluster</name>
        <dbReference type="ChEBI" id="CHEBI:49883"/>
        <label>1</label>
    </ligand>
</feature>
<feature type="binding site" evidence="1">
    <location>
        <position position="25"/>
    </location>
    <ligand>
        <name>[4Fe-4S] cluster</name>
        <dbReference type="ChEBI" id="CHEBI:49883"/>
        <label>1</label>
    </ligand>
</feature>
<feature type="binding site" evidence="1">
    <location>
        <position position="29"/>
    </location>
    <ligand>
        <name>[4Fe-4S] cluster</name>
        <dbReference type="ChEBI" id="CHEBI:49883"/>
        <label>2</label>
    </ligand>
</feature>
<feature type="binding site" evidence="1">
    <location>
        <position position="62"/>
    </location>
    <ligand>
        <name>[4Fe-4S] cluster</name>
        <dbReference type="ChEBI" id="CHEBI:49883"/>
        <label>2</label>
    </ligand>
</feature>
<feature type="binding site" evidence="1">
    <location>
        <position position="65"/>
    </location>
    <ligand>
        <name>[4Fe-4S] cluster</name>
        <dbReference type="ChEBI" id="CHEBI:49883"/>
        <label>2</label>
    </ligand>
</feature>
<feature type="binding site" evidence="1">
    <location>
        <position position="68"/>
    </location>
    <ligand>
        <name>[4Fe-4S] cluster</name>
        <dbReference type="ChEBI" id="CHEBI:49883"/>
        <label>2</label>
    </ligand>
</feature>
<feature type="binding site" evidence="1">
    <location>
        <position position="72"/>
    </location>
    <ligand>
        <name>[4Fe-4S] cluster</name>
        <dbReference type="ChEBI" id="CHEBI:49883"/>
        <label>1</label>
    </ligand>
</feature>
<accession>Q8TIB9</accession>
<evidence type="ECO:0000255" key="1">
    <source>
        <dbReference type="PROSITE-ProRule" id="PRU00711"/>
    </source>
</evidence>
<evidence type="ECO:0000269" key="2">
    <source>
    </source>
</evidence>
<evidence type="ECO:0000303" key="3">
    <source>
    </source>
</evidence>
<evidence type="ECO:0000305" key="4"/>
<proteinExistence type="evidence at protein level"/>
<keyword id="KW-0004">4Fe-4S</keyword>
<keyword id="KW-0963">Cytoplasm</keyword>
<keyword id="KW-0408">Iron</keyword>
<keyword id="KW-0411">Iron-sulfur</keyword>
<keyword id="KW-0479">Metal-binding</keyword>
<keyword id="KW-0484">Methanogenesis</keyword>
<keyword id="KW-0560">Oxidoreductase</keyword>
<keyword id="KW-1185">Reference proteome</keyword>
<keyword id="KW-0677">Repeat</keyword>
<name>HDRC2_METAC</name>
<gene>
    <name evidence="3" type="primary">hdrC2</name>
    <name type="ordered locus">MA_4236</name>
</gene>
<protein>
    <recommendedName>
        <fullName evidence="4">Ferredoxin/F(420)H(2)-dependent CoB-CoM heterodisulfide reductase subunit C</fullName>
        <ecNumber evidence="2">1.8.7.3</ecNumber>
        <ecNumber evidence="2">1.8.98.4</ecNumber>
    </recommendedName>
    <alternativeName>
        <fullName evidence="4">Coenzyme F420:CoB-CoM heterodisulfide,ferredoxin reductase subunit C</fullName>
    </alternativeName>
    <alternativeName>
        <fullName evidence="4">Ferredoxin:CoB-CoM heterodisulfide reductase subunit C</fullName>
    </alternativeName>
</protein>